<feature type="chain" id="PRO_0000292073" description="Probable chorismate pyruvate-lyase 2">
    <location>
        <begin position="1"/>
        <end position="185"/>
    </location>
</feature>
<feature type="binding site" evidence="1">
    <location>
        <position position="80"/>
    </location>
    <ligand>
        <name>substrate</name>
    </ligand>
</feature>
<feature type="binding site" evidence="1">
    <location>
        <position position="118"/>
    </location>
    <ligand>
        <name>substrate</name>
    </ligand>
</feature>
<feature type="binding site" evidence="1">
    <location>
        <position position="170"/>
    </location>
    <ligand>
        <name>substrate</name>
    </ligand>
</feature>
<protein>
    <recommendedName>
        <fullName evidence="1">Probable chorismate pyruvate-lyase 2</fullName>
        <shortName evidence="1">CL 2</shortName>
        <shortName evidence="1">CPL 2</shortName>
        <ecNumber evidence="1">4.1.3.40</ecNumber>
    </recommendedName>
</protein>
<proteinExistence type="inferred from homology"/>
<dbReference type="EC" id="4.1.3.40" evidence="1"/>
<dbReference type="EMBL" id="CT573326">
    <property type="protein sequence ID" value="CAK18072.1"/>
    <property type="molecule type" value="Genomic_DNA"/>
</dbReference>
<dbReference type="RefSeq" id="WP_011536424.1">
    <property type="nucleotide sequence ID" value="NC_008027.1"/>
</dbReference>
<dbReference type="SMR" id="Q1I2R4"/>
<dbReference type="STRING" id="384676.PSEEN5461"/>
<dbReference type="GeneID" id="32808366"/>
<dbReference type="KEGG" id="pen:PSEEN5461"/>
<dbReference type="eggNOG" id="COG3161">
    <property type="taxonomic scope" value="Bacteria"/>
</dbReference>
<dbReference type="HOGENOM" id="CLU_096824_3_0_6"/>
<dbReference type="OrthoDB" id="9789493at2"/>
<dbReference type="UniPathway" id="UPA00232"/>
<dbReference type="Proteomes" id="UP000000658">
    <property type="component" value="Chromosome"/>
</dbReference>
<dbReference type="GO" id="GO:0005829">
    <property type="term" value="C:cytosol"/>
    <property type="evidence" value="ECO:0007669"/>
    <property type="project" value="TreeGrafter"/>
</dbReference>
<dbReference type="GO" id="GO:0008813">
    <property type="term" value="F:chorismate lyase activity"/>
    <property type="evidence" value="ECO:0007669"/>
    <property type="project" value="UniProtKB-UniRule"/>
</dbReference>
<dbReference type="GO" id="GO:0042866">
    <property type="term" value="P:pyruvate biosynthetic process"/>
    <property type="evidence" value="ECO:0007669"/>
    <property type="project" value="UniProtKB-UniRule"/>
</dbReference>
<dbReference type="GO" id="GO:0006744">
    <property type="term" value="P:ubiquinone biosynthetic process"/>
    <property type="evidence" value="ECO:0007669"/>
    <property type="project" value="UniProtKB-UniRule"/>
</dbReference>
<dbReference type="Gene3D" id="3.40.1410.10">
    <property type="entry name" value="Chorismate lyase-like"/>
    <property type="match status" value="1"/>
</dbReference>
<dbReference type="HAMAP" id="MF_01632">
    <property type="entry name" value="UbiC"/>
    <property type="match status" value="1"/>
</dbReference>
<dbReference type="InterPro" id="IPR007440">
    <property type="entry name" value="Chorismate--pyruvate_lyase"/>
</dbReference>
<dbReference type="InterPro" id="IPR028978">
    <property type="entry name" value="Chorismate_lyase_/UTRA_dom_sf"/>
</dbReference>
<dbReference type="PANTHER" id="PTHR38683">
    <property type="entry name" value="CHORISMATE PYRUVATE-LYASE"/>
    <property type="match status" value="1"/>
</dbReference>
<dbReference type="PANTHER" id="PTHR38683:SF1">
    <property type="entry name" value="CHORISMATE PYRUVATE-LYASE"/>
    <property type="match status" value="1"/>
</dbReference>
<dbReference type="Pfam" id="PF04345">
    <property type="entry name" value="Chor_lyase"/>
    <property type="match status" value="1"/>
</dbReference>
<dbReference type="SUPFAM" id="SSF64288">
    <property type="entry name" value="Chorismate lyase-like"/>
    <property type="match status" value="1"/>
</dbReference>
<name>UBIC2_PSEE4</name>
<evidence type="ECO:0000255" key="1">
    <source>
        <dbReference type="HAMAP-Rule" id="MF_01632"/>
    </source>
</evidence>
<reference key="1">
    <citation type="journal article" date="2006" name="Nat. Biotechnol.">
        <title>Complete genome sequence of the entomopathogenic and metabolically versatile soil bacterium Pseudomonas entomophila.</title>
        <authorList>
            <person name="Vodovar N."/>
            <person name="Vallenet D."/>
            <person name="Cruveiller S."/>
            <person name="Rouy Z."/>
            <person name="Barbe V."/>
            <person name="Acosta C."/>
            <person name="Cattolico L."/>
            <person name="Jubin C."/>
            <person name="Lajus A."/>
            <person name="Segurens B."/>
            <person name="Vacherie B."/>
            <person name="Wincker P."/>
            <person name="Weissenbach J."/>
            <person name="Lemaitre B."/>
            <person name="Medigue C."/>
            <person name="Boccard F."/>
        </authorList>
    </citation>
    <scope>NUCLEOTIDE SEQUENCE [LARGE SCALE GENOMIC DNA]</scope>
    <source>
        <strain>L48</strain>
    </source>
</reference>
<accession>Q1I2R4</accession>
<organism>
    <name type="scientific">Pseudomonas entomophila (strain L48)</name>
    <dbReference type="NCBI Taxonomy" id="384676"/>
    <lineage>
        <taxon>Bacteria</taxon>
        <taxon>Pseudomonadati</taxon>
        <taxon>Pseudomonadota</taxon>
        <taxon>Gammaproteobacteria</taxon>
        <taxon>Pseudomonadales</taxon>
        <taxon>Pseudomonadaceae</taxon>
        <taxon>Pseudomonas</taxon>
    </lineage>
</organism>
<comment type="function">
    <text evidence="1">Removes the pyruvyl group from chorismate, with concomitant aromatization of the ring, to provide 4-hydroxybenzoate (4HB) for the ubiquinone pathway.</text>
</comment>
<comment type="catalytic activity">
    <reaction evidence="1">
        <text>chorismate = 4-hydroxybenzoate + pyruvate</text>
        <dbReference type="Rhea" id="RHEA:16505"/>
        <dbReference type="ChEBI" id="CHEBI:15361"/>
        <dbReference type="ChEBI" id="CHEBI:17879"/>
        <dbReference type="ChEBI" id="CHEBI:29748"/>
        <dbReference type="EC" id="4.1.3.40"/>
    </reaction>
</comment>
<comment type="pathway">
    <text evidence="1">Cofactor biosynthesis; ubiquinone biosynthesis.</text>
</comment>
<comment type="subcellular location">
    <subcellularLocation>
        <location evidence="1">Cytoplasm</location>
    </subcellularLocation>
</comment>
<comment type="similarity">
    <text evidence="1">Belongs to the UbiC family.</text>
</comment>
<gene>
    <name evidence="1" type="primary">ubiC2</name>
    <name type="ordered locus">PSEEN5461</name>
</gene>
<keyword id="KW-0963">Cytoplasm</keyword>
<keyword id="KW-0456">Lyase</keyword>
<keyword id="KW-0670">Pyruvate</keyword>
<keyword id="KW-0831">Ubiquinone biosynthesis</keyword>
<sequence length="185" mass="21060">MPYETPQAAAVAWLPYSQLATTLDQPTLDWLFDEGSLTRRLTRLSHDHFSVTPLFEGWQPLRDDECAALGLAPGEEGWVREVYLRGHDQPWVFARSVAGRSVLERGGLDLETLGTRSLGELLFCDQAFIRHPLEACRYPQTWLPTKVAHEGLWGRRSRFERSGLDLLVAEVFLPALWQAAKEETR</sequence>